<name>LIPA2_PARMW</name>
<gene>
    <name evidence="1" type="primary">lipA2</name>
    <name type="synonym">lipA</name>
    <name type="ordered locus">SYNW0929</name>
</gene>
<comment type="function">
    <text evidence="1">Catalyzes the radical-mediated insertion of two sulfur atoms into the C-6 and C-8 positions of the octanoyl moiety bound to the lipoyl domains of lipoate-dependent enzymes, thereby converting the octanoylated domains into lipoylated derivatives.</text>
</comment>
<comment type="catalytic activity">
    <reaction evidence="1">
        <text>[[Fe-S] cluster scaffold protein carrying a second [4Fe-4S](2+) cluster] + N(6)-octanoyl-L-lysyl-[protein] + 2 oxidized [2Fe-2S]-[ferredoxin] + 2 S-adenosyl-L-methionine + 4 H(+) = [[Fe-S] cluster scaffold protein] + N(6)-[(R)-dihydrolipoyl]-L-lysyl-[protein] + 4 Fe(3+) + 2 hydrogen sulfide + 2 5'-deoxyadenosine + 2 L-methionine + 2 reduced [2Fe-2S]-[ferredoxin]</text>
        <dbReference type="Rhea" id="RHEA:16585"/>
        <dbReference type="Rhea" id="RHEA-COMP:9928"/>
        <dbReference type="Rhea" id="RHEA-COMP:10000"/>
        <dbReference type="Rhea" id="RHEA-COMP:10001"/>
        <dbReference type="Rhea" id="RHEA-COMP:10475"/>
        <dbReference type="Rhea" id="RHEA-COMP:14568"/>
        <dbReference type="Rhea" id="RHEA-COMP:14569"/>
        <dbReference type="ChEBI" id="CHEBI:15378"/>
        <dbReference type="ChEBI" id="CHEBI:17319"/>
        <dbReference type="ChEBI" id="CHEBI:29034"/>
        <dbReference type="ChEBI" id="CHEBI:29919"/>
        <dbReference type="ChEBI" id="CHEBI:33722"/>
        <dbReference type="ChEBI" id="CHEBI:33737"/>
        <dbReference type="ChEBI" id="CHEBI:33738"/>
        <dbReference type="ChEBI" id="CHEBI:57844"/>
        <dbReference type="ChEBI" id="CHEBI:59789"/>
        <dbReference type="ChEBI" id="CHEBI:78809"/>
        <dbReference type="ChEBI" id="CHEBI:83100"/>
        <dbReference type="EC" id="2.8.1.8"/>
    </reaction>
</comment>
<comment type="cofactor">
    <cofactor evidence="1">
        <name>[4Fe-4S] cluster</name>
        <dbReference type="ChEBI" id="CHEBI:49883"/>
    </cofactor>
    <text evidence="1">Binds 2 [4Fe-4S] clusters per subunit. One cluster is coordinated with 3 cysteines and an exchangeable S-adenosyl-L-methionine.</text>
</comment>
<comment type="pathway">
    <text evidence="1">Protein modification; protein lipoylation via endogenous pathway; protein N(6)-(lipoyl)lysine from octanoyl-[acyl-carrier-protein]: step 2/2.</text>
</comment>
<comment type="subcellular location">
    <subcellularLocation>
        <location evidence="1">Cytoplasm</location>
    </subcellularLocation>
</comment>
<comment type="similarity">
    <text evidence="1">Belongs to the radical SAM superfamily. Lipoyl synthase family.</text>
</comment>
<sequence length="299" mass="32691">MSKYSTIAPTERLPEWLRRPIGDASALERVQGLVKQNRLHTICEEGRCPNRGECYAAGTATFLLGGSICTRSCAFCQVEKGQAPMAVDPAEAQRVADAVEAMQLRYVVLTAVARDDLADHGAALFTTTMEAIRARNPLIAIEVLTPDFWGGCPDPQQAVAAQRERLSTVLAADPVCFNHNLETVQRLQGEVRRGATYERSLGLLAACRELAPTIPTKSGLMLGLGESRDEVIAAMRDLRAVDCQRLTLGQYLRPSLAHIPVDRYWTPEEFDELGAVARDLGFAQVRSGPLVRSSYHAAD</sequence>
<accession>Q7U7Q2</accession>
<protein>
    <recommendedName>
        <fullName evidence="1">Lipoyl synthase 2</fullName>
        <ecNumber evidence="1">2.8.1.8</ecNumber>
    </recommendedName>
    <alternativeName>
        <fullName evidence="1">Lip-syn 2</fullName>
        <shortName evidence="1">LS 2</shortName>
    </alternativeName>
    <alternativeName>
        <fullName evidence="1">Lipoate synthase 2</fullName>
    </alternativeName>
    <alternativeName>
        <fullName evidence="1">Lipoic acid synthase 2</fullName>
    </alternativeName>
    <alternativeName>
        <fullName evidence="1">Sulfur insertion protein LipA 2</fullName>
    </alternativeName>
</protein>
<dbReference type="EC" id="2.8.1.8" evidence="1"/>
<dbReference type="EMBL" id="BX569691">
    <property type="protein sequence ID" value="CAE07444.1"/>
    <property type="molecule type" value="Genomic_DNA"/>
</dbReference>
<dbReference type="RefSeq" id="WP_011127794.1">
    <property type="nucleotide sequence ID" value="NC_005070.1"/>
</dbReference>
<dbReference type="SMR" id="Q7U7Q2"/>
<dbReference type="STRING" id="84588.SYNW0929"/>
<dbReference type="KEGG" id="syw:SYNW0929"/>
<dbReference type="eggNOG" id="COG0320">
    <property type="taxonomic scope" value="Bacteria"/>
</dbReference>
<dbReference type="HOGENOM" id="CLU_033144_2_1_3"/>
<dbReference type="UniPathway" id="UPA00538">
    <property type="reaction ID" value="UER00593"/>
</dbReference>
<dbReference type="Proteomes" id="UP000001422">
    <property type="component" value="Chromosome"/>
</dbReference>
<dbReference type="GO" id="GO:0005737">
    <property type="term" value="C:cytoplasm"/>
    <property type="evidence" value="ECO:0007669"/>
    <property type="project" value="UniProtKB-SubCell"/>
</dbReference>
<dbReference type="GO" id="GO:0051539">
    <property type="term" value="F:4 iron, 4 sulfur cluster binding"/>
    <property type="evidence" value="ECO:0007669"/>
    <property type="project" value="UniProtKB-UniRule"/>
</dbReference>
<dbReference type="GO" id="GO:0016992">
    <property type="term" value="F:lipoate synthase activity"/>
    <property type="evidence" value="ECO:0007669"/>
    <property type="project" value="UniProtKB-UniRule"/>
</dbReference>
<dbReference type="GO" id="GO:0046872">
    <property type="term" value="F:metal ion binding"/>
    <property type="evidence" value="ECO:0007669"/>
    <property type="project" value="UniProtKB-KW"/>
</dbReference>
<dbReference type="Gene3D" id="3.20.20.70">
    <property type="entry name" value="Aldolase class I"/>
    <property type="match status" value="1"/>
</dbReference>
<dbReference type="HAMAP" id="MF_00206">
    <property type="entry name" value="Lipoyl_synth"/>
    <property type="match status" value="1"/>
</dbReference>
<dbReference type="InterPro" id="IPR013785">
    <property type="entry name" value="Aldolase_TIM"/>
</dbReference>
<dbReference type="InterPro" id="IPR006638">
    <property type="entry name" value="Elp3/MiaA/NifB-like_rSAM"/>
</dbReference>
<dbReference type="InterPro" id="IPR003698">
    <property type="entry name" value="Lipoyl_synth"/>
</dbReference>
<dbReference type="InterPro" id="IPR007197">
    <property type="entry name" value="rSAM"/>
</dbReference>
<dbReference type="NCBIfam" id="TIGR00510">
    <property type="entry name" value="lipA"/>
    <property type="match status" value="1"/>
</dbReference>
<dbReference type="NCBIfam" id="NF004019">
    <property type="entry name" value="PRK05481.1"/>
    <property type="match status" value="1"/>
</dbReference>
<dbReference type="NCBIfam" id="NF009544">
    <property type="entry name" value="PRK12928.1"/>
    <property type="match status" value="1"/>
</dbReference>
<dbReference type="PANTHER" id="PTHR10949">
    <property type="entry name" value="LIPOYL SYNTHASE"/>
    <property type="match status" value="1"/>
</dbReference>
<dbReference type="PANTHER" id="PTHR10949:SF0">
    <property type="entry name" value="LIPOYL SYNTHASE, MITOCHONDRIAL"/>
    <property type="match status" value="1"/>
</dbReference>
<dbReference type="Pfam" id="PF04055">
    <property type="entry name" value="Radical_SAM"/>
    <property type="match status" value="1"/>
</dbReference>
<dbReference type="PIRSF" id="PIRSF005963">
    <property type="entry name" value="Lipoyl_synth"/>
    <property type="match status" value="1"/>
</dbReference>
<dbReference type="SFLD" id="SFLDF00271">
    <property type="entry name" value="lipoyl_synthase"/>
    <property type="match status" value="1"/>
</dbReference>
<dbReference type="SFLD" id="SFLDS00029">
    <property type="entry name" value="Radical_SAM"/>
    <property type="match status" value="1"/>
</dbReference>
<dbReference type="SMART" id="SM00729">
    <property type="entry name" value="Elp3"/>
    <property type="match status" value="1"/>
</dbReference>
<dbReference type="SUPFAM" id="SSF102114">
    <property type="entry name" value="Radical SAM enzymes"/>
    <property type="match status" value="1"/>
</dbReference>
<dbReference type="PROSITE" id="PS51918">
    <property type="entry name" value="RADICAL_SAM"/>
    <property type="match status" value="1"/>
</dbReference>
<proteinExistence type="inferred from homology"/>
<organism>
    <name type="scientific">Parasynechococcus marenigrum (strain WH8102)</name>
    <dbReference type="NCBI Taxonomy" id="84588"/>
    <lineage>
        <taxon>Bacteria</taxon>
        <taxon>Bacillati</taxon>
        <taxon>Cyanobacteriota</taxon>
        <taxon>Cyanophyceae</taxon>
        <taxon>Synechococcales</taxon>
        <taxon>Prochlorococcaceae</taxon>
        <taxon>Parasynechococcus</taxon>
        <taxon>Parasynechococcus marenigrum</taxon>
    </lineage>
</organism>
<keyword id="KW-0004">4Fe-4S</keyword>
<keyword id="KW-0963">Cytoplasm</keyword>
<keyword id="KW-0408">Iron</keyword>
<keyword id="KW-0411">Iron-sulfur</keyword>
<keyword id="KW-0479">Metal-binding</keyword>
<keyword id="KW-0949">S-adenosyl-L-methionine</keyword>
<keyword id="KW-0808">Transferase</keyword>
<evidence type="ECO:0000255" key="1">
    <source>
        <dbReference type="HAMAP-Rule" id="MF_00206"/>
    </source>
</evidence>
<evidence type="ECO:0000255" key="2">
    <source>
        <dbReference type="PROSITE-ProRule" id="PRU01266"/>
    </source>
</evidence>
<feature type="chain" id="PRO_0000102370" description="Lipoyl synthase 2">
    <location>
        <begin position="1"/>
        <end position="299"/>
    </location>
</feature>
<feature type="domain" description="Radical SAM core" evidence="2">
    <location>
        <begin position="55"/>
        <end position="283"/>
    </location>
</feature>
<feature type="binding site" evidence="1">
    <location>
        <position position="43"/>
    </location>
    <ligand>
        <name>[4Fe-4S] cluster</name>
        <dbReference type="ChEBI" id="CHEBI:49883"/>
        <label>1</label>
    </ligand>
</feature>
<feature type="binding site" evidence="1">
    <location>
        <position position="48"/>
    </location>
    <ligand>
        <name>[4Fe-4S] cluster</name>
        <dbReference type="ChEBI" id="CHEBI:49883"/>
        <label>1</label>
    </ligand>
</feature>
<feature type="binding site" evidence="1">
    <location>
        <position position="54"/>
    </location>
    <ligand>
        <name>[4Fe-4S] cluster</name>
        <dbReference type="ChEBI" id="CHEBI:49883"/>
        <label>1</label>
    </ligand>
</feature>
<feature type="binding site" evidence="1">
    <location>
        <position position="69"/>
    </location>
    <ligand>
        <name>[4Fe-4S] cluster</name>
        <dbReference type="ChEBI" id="CHEBI:49883"/>
        <label>2</label>
        <note>4Fe-4S-S-AdoMet</note>
    </ligand>
</feature>
<feature type="binding site" evidence="1">
    <location>
        <position position="73"/>
    </location>
    <ligand>
        <name>[4Fe-4S] cluster</name>
        <dbReference type="ChEBI" id="CHEBI:49883"/>
        <label>2</label>
        <note>4Fe-4S-S-AdoMet</note>
    </ligand>
</feature>
<feature type="binding site" evidence="1">
    <location>
        <position position="76"/>
    </location>
    <ligand>
        <name>[4Fe-4S] cluster</name>
        <dbReference type="ChEBI" id="CHEBI:49883"/>
        <label>2</label>
        <note>4Fe-4S-S-AdoMet</note>
    </ligand>
</feature>
<feature type="binding site" evidence="1">
    <location>
        <position position="294"/>
    </location>
    <ligand>
        <name>[4Fe-4S] cluster</name>
        <dbReference type="ChEBI" id="CHEBI:49883"/>
        <label>1</label>
    </ligand>
</feature>
<reference key="1">
    <citation type="journal article" date="2003" name="Nature">
        <title>The genome of a motile marine Synechococcus.</title>
        <authorList>
            <person name="Palenik B."/>
            <person name="Brahamsha B."/>
            <person name="Larimer F.W."/>
            <person name="Land M.L."/>
            <person name="Hauser L."/>
            <person name="Chain P."/>
            <person name="Lamerdin J.E."/>
            <person name="Regala W."/>
            <person name="Allen E.E."/>
            <person name="McCarren J."/>
            <person name="Paulsen I.T."/>
            <person name="Dufresne A."/>
            <person name="Partensky F."/>
            <person name="Webb E.A."/>
            <person name="Waterbury J."/>
        </authorList>
    </citation>
    <scope>NUCLEOTIDE SEQUENCE [LARGE SCALE GENOMIC DNA]</scope>
    <source>
        <strain>WH8102</strain>
    </source>
</reference>